<feature type="chain" id="PRO_0000460443" description="CMP-5'-(N-hydroxy-3-aminopropyl)phosphonate acetyltransferase">
    <location>
        <begin position="1"/>
        <end position="286"/>
    </location>
</feature>
<feature type="binding site" evidence="3 9">
    <location>
        <position position="45"/>
    </location>
    <ligand>
        <name>acetyl-CoA</name>
        <dbReference type="ChEBI" id="CHEBI:57288"/>
    </ligand>
</feature>
<feature type="binding site" evidence="3 9">
    <location>
        <position position="46"/>
    </location>
    <ligand>
        <name>acetyl-CoA</name>
        <dbReference type="ChEBI" id="CHEBI:57288"/>
    </ligand>
</feature>
<feature type="binding site" evidence="3 9">
    <location>
        <position position="47"/>
    </location>
    <ligand>
        <name>acetyl-CoA</name>
        <dbReference type="ChEBI" id="CHEBI:57288"/>
    </ligand>
</feature>
<feature type="binding site" evidence="3 9">
    <location>
        <position position="48"/>
    </location>
    <ligand>
        <name>acetyl-CoA</name>
        <dbReference type="ChEBI" id="CHEBI:57288"/>
    </ligand>
</feature>
<feature type="binding site" evidence="3 9">
    <location>
        <position position="49"/>
    </location>
    <ligand>
        <name>acetyl-CoA</name>
        <dbReference type="ChEBI" id="CHEBI:57288"/>
    </ligand>
</feature>
<feature type="binding site" evidence="3 9">
    <location>
        <position position="54"/>
    </location>
    <ligand>
        <name>acetyl-CoA</name>
        <dbReference type="ChEBI" id="CHEBI:57288"/>
    </ligand>
</feature>
<feature type="binding site" evidence="3 9">
    <location>
        <position position="122"/>
    </location>
    <ligand>
        <name>acetyl-CoA</name>
        <dbReference type="ChEBI" id="CHEBI:57288"/>
    </ligand>
</feature>
<feature type="binding site" evidence="3 9">
    <location>
        <position position="188"/>
    </location>
    <ligand>
        <name>acetyl-CoA</name>
        <dbReference type="ChEBI" id="CHEBI:57288"/>
    </ligand>
</feature>
<feature type="binding site" evidence="3 9">
    <location>
        <position position="190"/>
    </location>
    <ligand>
        <name>acetyl-CoA</name>
        <dbReference type="ChEBI" id="CHEBI:57288"/>
    </ligand>
</feature>
<feature type="mutagenesis site" description="Retains 1.5% of activity with CMP-5'-3APn as substrate." evidence="3">
    <original>H</original>
    <variation>A</variation>
    <location>
        <position position="45"/>
    </location>
</feature>
<feature type="mutagenesis site" description="No change in activity with CMP-5'-3APn as substrate." evidence="3">
    <original>E</original>
    <variation>A</variation>
    <location>
        <position position="187"/>
    </location>
</feature>
<feature type="mutagenesis site" description="Modest decrease in activity with CMP-5'-3APn as substrate." evidence="3">
    <original>S</original>
    <variation>A</variation>
    <location>
        <position position="188"/>
    </location>
</feature>
<feature type="mutagenesis site" description="Loss of activity with CMP-5'-3APn as substrate." evidence="3">
    <original>T</original>
    <variation>A</variation>
    <variation>C</variation>
    <location>
        <position position="190"/>
    </location>
</feature>
<feature type="mutagenesis site" description="No change in activity with CMP-5'-3APn as substrate." evidence="3">
    <original>T</original>
    <variation>S</variation>
    <location>
        <position position="190"/>
    </location>
</feature>
<feature type="mutagenesis site" description="Retains less that 1% of activity with CMP-5'-3APn as substrate." evidence="3">
    <original>H</original>
    <variation>A</variation>
    <location>
        <position position="193"/>
    </location>
</feature>
<feature type="mutagenesis site" description="No change in activity with CMP-5'-3APn as substrate." evidence="3">
    <original>E</original>
    <variation>A</variation>
    <location>
        <position position="231"/>
    </location>
</feature>
<feature type="helix" evidence="10">
    <location>
        <begin position="24"/>
        <end position="34"/>
    </location>
</feature>
<feature type="strand" evidence="10">
    <location>
        <begin position="41"/>
        <end position="46"/>
    </location>
</feature>
<feature type="helix" evidence="10">
    <location>
        <begin position="57"/>
        <end position="69"/>
    </location>
</feature>
<feature type="strand" evidence="10">
    <location>
        <begin position="74"/>
        <end position="78"/>
    </location>
</feature>
<feature type="helix" evidence="10">
    <location>
        <begin position="87"/>
        <end position="89"/>
    </location>
</feature>
<feature type="helix" evidence="10">
    <location>
        <begin position="97"/>
        <end position="99"/>
    </location>
</feature>
<feature type="helix" evidence="10">
    <location>
        <begin position="100"/>
        <end position="106"/>
    </location>
</feature>
<feature type="turn" evidence="10">
    <location>
        <begin position="112"/>
        <end position="114"/>
    </location>
</feature>
<feature type="strand" evidence="10">
    <location>
        <begin position="118"/>
        <end position="120"/>
    </location>
</feature>
<feature type="helix" evidence="10">
    <location>
        <begin position="122"/>
        <end position="127"/>
    </location>
</feature>
<feature type="turn" evidence="10">
    <location>
        <begin position="139"/>
        <end position="141"/>
    </location>
</feature>
<feature type="strand" evidence="10">
    <location>
        <begin position="143"/>
        <end position="147"/>
    </location>
</feature>
<feature type="helix" evidence="10">
    <location>
        <begin position="150"/>
        <end position="154"/>
    </location>
</feature>
<feature type="turn" evidence="10">
    <location>
        <begin position="160"/>
        <end position="163"/>
    </location>
</feature>
<feature type="helix" evidence="10">
    <location>
        <begin position="168"/>
        <end position="174"/>
    </location>
</feature>
<feature type="strand" evidence="10">
    <location>
        <begin position="178"/>
        <end position="183"/>
    </location>
</feature>
<feature type="helix" evidence="10">
    <location>
        <begin position="186"/>
        <end position="188"/>
    </location>
</feature>
<feature type="helix" evidence="10">
    <location>
        <begin position="192"/>
        <end position="198"/>
    </location>
</feature>
<feature type="strand" evidence="10">
    <location>
        <begin position="206"/>
        <end position="215"/>
    </location>
</feature>
<feature type="strand" evidence="10">
    <location>
        <begin position="218"/>
        <end position="227"/>
    </location>
</feature>
<feature type="helix" evidence="10">
    <location>
        <begin position="234"/>
        <end position="244"/>
    </location>
</feature>
<feature type="strand" evidence="10">
    <location>
        <begin position="249"/>
        <end position="253"/>
    </location>
</feature>
<feature type="strand" evidence="10">
    <location>
        <begin position="256"/>
        <end position="262"/>
    </location>
</feature>
<feature type="helix" evidence="10">
    <location>
        <begin position="263"/>
        <end position="277"/>
    </location>
</feature>
<proteinExistence type="evidence at protein level"/>
<evidence type="ECO:0000269" key="1">
    <source>
    </source>
</evidence>
<evidence type="ECO:0000269" key="2">
    <source>
    </source>
</evidence>
<evidence type="ECO:0000269" key="3">
    <source>
    </source>
</evidence>
<evidence type="ECO:0000303" key="4">
    <source>
    </source>
</evidence>
<evidence type="ECO:0000303" key="5">
    <source>
    </source>
</evidence>
<evidence type="ECO:0000305" key="6"/>
<evidence type="ECO:0000305" key="7">
    <source>
    </source>
</evidence>
<evidence type="ECO:0000312" key="8">
    <source>
        <dbReference type="EMBL" id="KJS60090.1"/>
    </source>
</evidence>
<evidence type="ECO:0007744" key="9">
    <source>
        <dbReference type="PDB" id="3SMA"/>
    </source>
</evidence>
<evidence type="ECO:0007829" key="10">
    <source>
        <dbReference type="PDB" id="3SMA"/>
    </source>
</evidence>
<keyword id="KW-0002">3D-structure</keyword>
<keyword id="KW-0012">Acyltransferase</keyword>
<keyword id="KW-0045">Antibiotic biosynthesis</keyword>
<keyword id="KW-1185">Reference proteome</keyword>
<keyword id="KW-0808">Transferase</keyword>
<accession>Q0ZQ43</accession>
<accession>A0A0F2TCP3</accession>
<protein>
    <recommendedName>
        <fullName evidence="6">CMP-5'-(N-hydroxy-3-aminopropyl)phosphonate acetyltransferase</fullName>
        <ecNumber evidence="2 3">2.3.1.-</ecNumber>
    </recommendedName>
    <alternativeName>
        <fullName evidence="5">Phosphonate biosynthetic enzyme FrbF</fullName>
    </alternativeName>
</protein>
<gene>
    <name evidence="4" type="primary">frbF</name>
    <name evidence="8" type="ORF">VM95_23220</name>
</gene>
<comment type="function">
    <text evidence="2 3">Acetyltransferase involved in the biosynthesis of the phosphonate antibiotic FR-900098, a potent antimalarial agent that acts as an inhibitor of 1-deoxy-D-xylulose 5-phosphate reductoisomerase (DXR), the first enzyme in the nonmevalonate pathway for isoprenoid biosynthesis (PubMed:20142041). Catalyzes the N-acetylation of CMP-5'-(N-hydroxy-3-aminopropyl)phosphonate (CMP-5'-H3APn), leading to the formation of CMP-5'-(N-acetyl-N-hydroxy-3-aminopropyl)phosphonate (CMP-5'-FR-900098) (PubMed:20142041, PubMed:21865168). In vitro, can also catalyze the acetylation of CMP-5'-3-aminopropylphosphonate (CMP-5'-3APn), leading to the formation of CMP-5'-N-acetyl-3-aminopropylphosphonate (CMP-5'-Ac3APn), which is a dead-end in the FR-900098 biosynthetic pathway rather than a true intermediate (PubMed:20142041, PubMed:21865168). Can use the alternative CoA substrates propionyl-CoA, malonyl-CoA and acetoacetyl-CoA, with much lower efficiency (PubMed:21865168).</text>
</comment>
<comment type="catalytic activity">
    <reaction evidence="2 3">
        <text>CMP-5'-(N-hydroxy-3-aminopropyl)phosphonate + acetyl-CoA = CMP-5'-(N-acetyl-N-hydroxy-3-aminopropyl)phosphonate + CoA</text>
        <dbReference type="Rhea" id="RHEA:78495"/>
        <dbReference type="ChEBI" id="CHEBI:57287"/>
        <dbReference type="ChEBI" id="CHEBI:57288"/>
        <dbReference type="ChEBI" id="CHEBI:229207"/>
        <dbReference type="ChEBI" id="CHEBI:229208"/>
    </reaction>
    <physiologicalReaction direction="left-to-right" evidence="2">
        <dbReference type="Rhea" id="RHEA:78496"/>
    </physiologicalReaction>
</comment>
<comment type="biophysicochemical properties">
    <kinetics>
        <KM evidence="2">52.3 uM for CMP-5'-H3APn</KM>
        <KM evidence="2">35.2 uM for CMP-5'-3APn</KM>
        <KM evidence="3">391 uM for CMP-5'-3APn</KM>
        <KM evidence="3">19.5 uM for acetyl-CoA</KM>
        <KM evidence="3">23.6 uM for propionyl-CoA</KM>
        <text evidence="2 3">kcat is 2.04 min(-1) with CMP-5'-H3APn as substrate (PubMed:20142041). kcat is 3.46 min(-1) with CMP-5'-3APn as substrate (PubMed:20142041). kcat is 2.04 min(-1) with CMP-5'-3APn as substrate (PubMed:21865168). kcat is 1.12 min(-1) with acetyl-CoA as substrate (PubMed:21865168). kcat is 0.089 min(-1) with propionyl-CoA as substrate (PubMed:21865168).</text>
    </kinetics>
</comment>
<comment type="pathway">
    <text evidence="1 2">Antibiotic biosynthesis.</text>
</comment>
<comment type="subunit">
    <text evidence="3 7">Homodimer (Probable). The four molecules in the crystallographic asymmetric unit pack as two pairs of dimers (PubMed:21865168).</text>
</comment>
<comment type="domain">
    <text evidence="3">The acetyltransferase fold is distinct from that of members of the canonical GNAT superfamily.</text>
</comment>
<comment type="similarity">
    <text evidence="6">Belongs to the antibiotic N-acetyltransferase family.</text>
</comment>
<comment type="sequence caution" evidence="6">
    <conflict type="erroneous initiation">
        <sequence resource="EMBL-CDS" id="KJS60090"/>
    </conflict>
    <text>Truncated N-terminus.</text>
</comment>
<sequence length="286" mass="31546">MIRHIDARREDLEPDRQDRELVTRDRLASDLAALGVRPGGVLLVHASLSALGWVCGGAQAVVLALQDAVGKEGTLVMPTFSGDLSDPSTWRRPPVPEDWWPVIREQMPPFDPDLTPTRGMGAVAECFRRAAGAVRSGHPQNSFAAWGAHAEQVVAEHGLTERLGRGSPLEQVYRLDGQVLLLGCGFESNTSFHLAEYRTAYPGRRSHRRRVPVPEGDRVRWVEQEDIVYFEEDFQTMGESCLTRTPGHSRGTVGEAAAVLYGQRAFVDLACEWMTAHRDLARAVGA</sequence>
<dbReference type="EC" id="2.3.1.-" evidence="2 3"/>
<dbReference type="EMBL" id="DQ267750">
    <property type="protein sequence ID" value="ABB90395.1"/>
    <property type="molecule type" value="Genomic_DNA"/>
</dbReference>
<dbReference type="EMBL" id="JZKH01000051">
    <property type="protein sequence ID" value="KJS60090.1"/>
    <property type="status" value="ALT_INIT"/>
    <property type="molecule type" value="Genomic_DNA"/>
</dbReference>
<dbReference type="RefSeq" id="WP_045699993.1">
    <property type="nucleotide sequence ID" value="NZ_JZKH01000051.1"/>
</dbReference>
<dbReference type="PDB" id="3SMA">
    <property type="method" value="X-ray"/>
    <property type="resolution" value="2.00 A"/>
    <property type="chains" value="A/B/C/D=1-286"/>
</dbReference>
<dbReference type="PDBsum" id="3SMA"/>
<dbReference type="SMR" id="Q0ZQ43"/>
<dbReference type="PATRIC" id="fig|359131.3.peg.5651"/>
<dbReference type="OrthoDB" id="7330654at2"/>
<dbReference type="BioCyc" id="MetaCyc:MONOMER-18402"/>
<dbReference type="EvolutionaryTrace" id="Q0ZQ43"/>
<dbReference type="Proteomes" id="UP000033699">
    <property type="component" value="Unassembled WGS sequence"/>
</dbReference>
<dbReference type="GO" id="GO:0046353">
    <property type="term" value="F:aminoglycoside 3-N-acetyltransferase activity"/>
    <property type="evidence" value="ECO:0007669"/>
    <property type="project" value="UniProtKB-EC"/>
</dbReference>
<dbReference type="GO" id="GO:0017000">
    <property type="term" value="P:antibiotic biosynthetic process"/>
    <property type="evidence" value="ECO:0007669"/>
    <property type="project" value="UniProtKB-KW"/>
</dbReference>
<dbReference type="GO" id="GO:0046677">
    <property type="term" value="P:response to antibiotic"/>
    <property type="evidence" value="ECO:0007669"/>
    <property type="project" value="InterPro"/>
</dbReference>
<dbReference type="InterPro" id="IPR003679">
    <property type="entry name" value="Amioglycoside_AcTrfase"/>
</dbReference>
<dbReference type="InterPro" id="IPR028345">
    <property type="entry name" value="Antibiotic_NAT-like"/>
</dbReference>
<dbReference type="PANTHER" id="PTHR11104">
    <property type="entry name" value="AMINOGLYCOSIDE N3-ACETYLTRANSFERASE"/>
    <property type="match status" value="1"/>
</dbReference>
<dbReference type="PANTHER" id="PTHR11104:SF0">
    <property type="entry name" value="SPBETA PROPHAGE-DERIVED AMINOGLYCOSIDE N(3')-ACETYLTRANSFERASE-LIKE PROTEIN YOKD"/>
    <property type="match status" value="1"/>
</dbReference>
<dbReference type="Pfam" id="PF02522">
    <property type="entry name" value="Antibiotic_NAT"/>
    <property type="match status" value="1"/>
</dbReference>
<dbReference type="SUPFAM" id="SSF110710">
    <property type="entry name" value="TTHA0583/YokD-like"/>
    <property type="match status" value="1"/>
</dbReference>
<name>FRBF_STRR3</name>
<reference key="1">
    <citation type="journal article" date="2008" name="Chem. Biol.">
        <title>Cloning, expression, and biochemical characterization of Streptomyces rubellomurinus genes required for biosynthesis of antimalarial compound FR900098.</title>
        <authorList>
            <person name="Eliot A.C."/>
            <person name="Griffin B.M."/>
            <person name="Thomas P.M."/>
            <person name="Johannes T.W."/>
            <person name="Kelleher N.L."/>
            <person name="Zhao H."/>
            <person name="Metcalf W.W."/>
        </authorList>
    </citation>
    <scope>NUCLEOTIDE SEQUENCE [GENOMIC DNA]</scope>
    <scope>PATHWAY</scope>
    <source>
        <strain>ATCC 31215</strain>
    </source>
</reference>
<reference key="2">
    <citation type="submission" date="2015-02" db="EMBL/GenBank/DDBJ databases">
        <authorList>
            <person name="Ju K.-S."/>
            <person name="Doroghazi J.R."/>
            <person name="Metcalf W."/>
        </authorList>
    </citation>
    <scope>NUCLEOTIDE SEQUENCE [LARGE SCALE GENOMIC DNA]</scope>
    <source>
        <strain>ATCC 31215</strain>
    </source>
</reference>
<reference key="3">
    <citation type="journal article" date="2010" name="Chem. Biol.">
        <title>Deciphering the late biosynthetic steps of antimalarial compound FR-900098.</title>
        <authorList>
            <person name="Johannes T.W."/>
            <person name="DeSieno M.A."/>
            <person name="Griffin B.M."/>
            <person name="Thomas P.M."/>
            <person name="Kelleher N.L."/>
            <person name="Metcalf W.W."/>
            <person name="Zhao H."/>
        </authorList>
    </citation>
    <scope>FUNCTION</scope>
    <scope>CATALYTIC ACTIVITY</scope>
    <scope>BIOPHYSICOCHEMICAL PROPERTIES</scope>
    <scope>PATHWAY</scope>
    <source>
        <strain>ATCC 31215</strain>
    </source>
</reference>
<reference evidence="9" key="4">
    <citation type="journal article" date="2011" name="J. Biol. Chem.">
        <title>New N-acetyltransferase fold in the structure and mechanism of the phosphonate biosynthetic enzyme FrbF.</title>
        <authorList>
            <person name="Bae B."/>
            <person name="Cobb R.E."/>
            <person name="DeSieno M.A."/>
            <person name="Zhao H."/>
            <person name="Nair S.K."/>
        </authorList>
    </citation>
    <scope>X-RAY CRYSTALLOGRAPHY (2.00 ANGSTROMS) IN COMPLEX WITH ACETYL-COA</scope>
    <scope>FUNCTION</scope>
    <scope>CATALYTIC ACTIVITY</scope>
    <scope>BIOPHYSICOCHEMICAL PROPERTIES</scope>
    <scope>SUBUNIT</scope>
    <scope>DOMAIN</scope>
    <scope>MUTAGENESIS OF HIS-45; GLU-187; SER-188; THR-190; HIS-193 AND GLU-231</scope>
</reference>
<organism>
    <name type="scientific">Streptomyces rubellomurinus (strain ATCC 31215)</name>
    <dbReference type="NCBI Taxonomy" id="359131"/>
    <lineage>
        <taxon>Bacteria</taxon>
        <taxon>Bacillati</taxon>
        <taxon>Actinomycetota</taxon>
        <taxon>Actinomycetes</taxon>
        <taxon>Kitasatosporales</taxon>
        <taxon>Streptomycetaceae</taxon>
        <taxon>Streptomyces</taxon>
    </lineage>
</organism>